<name>GLGC_BACCZ</name>
<feature type="chain" id="PRO_0000195279" description="Glucose-1-phosphate adenylyltransferase">
    <location>
        <begin position="1"/>
        <end position="376"/>
    </location>
</feature>
<feature type="binding site" evidence="1">
    <location>
        <position position="101"/>
    </location>
    <ligand>
        <name>alpha-D-glucose 1-phosphate</name>
        <dbReference type="ChEBI" id="CHEBI:58601"/>
    </ligand>
</feature>
<feature type="binding site" evidence="1">
    <location>
        <position position="166"/>
    </location>
    <ligand>
        <name>alpha-D-glucose 1-phosphate</name>
        <dbReference type="ChEBI" id="CHEBI:58601"/>
    </ligand>
</feature>
<feature type="binding site" evidence="1">
    <location>
        <begin position="181"/>
        <end position="182"/>
    </location>
    <ligand>
        <name>alpha-D-glucose 1-phosphate</name>
        <dbReference type="ChEBI" id="CHEBI:58601"/>
    </ligand>
</feature>
<feature type="binding site" evidence="1">
    <location>
        <position position="192"/>
    </location>
    <ligand>
        <name>alpha-D-glucose 1-phosphate</name>
        <dbReference type="ChEBI" id="CHEBI:58601"/>
    </ligand>
</feature>
<protein>
    <recommendedName>
        <fullName evidence="1">Glucose-1-phosphate adenylyltransferase</fullName>
        <ecNumber evidence="1">2.7.7.27</ecNumber>
    </recommendedName>
    <alternativeName>
        <fullName evidence="1">ADP-glucose pyrophosphorylase</fullName>
        <shortName evidence="1">ADPGlc PPase</shortName>
    </alternativeName>
    <alternativeName>
        <fullName evidence="1">ADP-glucose synthase</fullName>
    </alternativeName>
</protein>
<accession>Q632H2</accession>
<sequence length="376" mass="42034">MAQKQKCVAMLLAGGKGSRLSALTKNLAKPAVPFGGKYRIIDFTLSNCANSGIETVGILTQYQPLELHNYIGIGNAWDLDRVSGGVTVLPPYAESSGVKWYTGTASAIYQNLNYLSQYEPEYVLILSGDHIYKMDYSKMLDYHIEKEADVSISVIEVPWDEASRFGIMNTNEEMEIVEFEEKPQFPRSNLASMGIYIFNWAILKEYLEMDARNPESSNDFGKDVLPLLLDEGKKLMAYPFEGYWKDVGTVKSLWEANMDLLRDETSLNLNDRDWRIYSVNPNEPPQYIAEKAKVEESLINEGCVIEGDVKHSVLFQGVTVEEGSMVIDSVVMPGAKIGKNVVIERAIVGSEMVIEDGTIIRPEKNVDDVVLIAEGK</sequence>
<keyword id="KW-0067">ATP-binding</keyword>
<keyword id="KW-0119">Carbohydrate metabolism</keyword>
<keyword id="KW-0320">Glycogen biosynthesis</keyword>
<keyword id="KW-0321">Glycogen metabolism</keyword>
<keyword id="KW-0547">Nucleotide-binding</keyword>
<keyword id="KW-0548">Nucleotidyltransferase</keyword>
<keyword id="KW-0808">Transferase</keyword>
<proteinExistence type="inferred from homology"/>
<reference key="1">
    <citation type="journal article" date="2006" name="J. Bacteriol.">
        <title>Pathogenomic sequence analysis of Bacillus cereus and Bacillus thuringiensis isolates closely related to Bacillus anthracis.</title>
        <authorList>
            <person name="Han C.S."/>
            <person name="Xie G."/>
            <person name="Challacombe J.F."/>
            <person name="Altherr M.R."/>
            <person name="Bhotika S.S."/>
            <person name="Bruce D."/>
            <person name="Campbell C.S."/>
            <person name="Campbell M.L."/>
            <person name="Chen J."/>
            <person name="Chertkov O."/>
            <person name="Cleland C."/>
            <person name="Dimitrijevic M."/>
            <person name="Doggett N.A."/>
            <person name="Fawcett J.J."/>
            <person name="Glavina T."/>
            <person name="Goodwin L.A."/>
            <person name="Hill K.K."/>
            <person name="Hitchcock P."/>
            <person name="Jackson P.J."/>
            <person name="Keim P."/>
            <person name="Kewalramani A.R."/>
            <person name="Longmire J."/>
            <person name="Lucas S."/>
            <person name="Malfatti S."/>
            <person name="McMurry K."/>
            <person name="Meincke L.J."/>
            <person name="Misra M."/>
            <person name="Moseman B.L."/>
            <person name="Mundt M."/>
            <person name="Munk A.C."/>
            <person name="Okinaka R.T."/>
            <person name="Parson-Quintana B."/>
            <person name="Reilly L.P."/>
            <person name="Richardson P."/>
            <person name="Robinson D.L."/>
            <person name="Rubin E."/>
            <person name="Saunders E."/>
            <person name="Tapia R."/>
            <person name="Tesmer J.G."/>
            <person name="Thayer N."/>
            <person name="Thompson L.S."/>
            <person name="Tice H."/>
            <person name="Ticknor L.O."/>
            <person name="Wills P.L."/>
            <person name="Brettin T.S."/>
            <person name="Gilna P."/>
        </authorList>
    </citation>
    <scope>NUCLEOTIDE SEQUENCE [LARGE SCALE GENOMIC DNA]</scope>
    <source>
        <strain>ZK / E33L</strain>
    </source>
</reference>
<dbReference type="EC" id="2.7.7.27" evidence="1"/>
<dbReference type="EMBL" id="CP000001">
    <property type="protein sequence ID" value="AAU15654.1"/>
    <property type="molecule type" value="Genomic_DNA"/>
</dbReference>
<dbReference type="RefSeq" id="WP_000057611.1">
    <property type="nucleotide sequence ID" value="NZ_CP009968.1"/>
</dbReference>
<dbReference type="SMR" id="Q632H2"/>
<dbReference type="GeneID" id="45024727"/>
<dbReference type="KEGG" id="bcz:BCE33L4620"/>
<dbReference type="PATRIC" id="fig|288681.22.peg.741"/>
<dbReference type="UniPathway" id="UPA00164"/>
<dbReference type="Proteomes" id="UP000002612">
    <property type="component" value="Chromosome"/>
</dbReference>
<dbReference type="GO" id="GO:0005524">
    <property type="term" value="F:ATP binding"/>
    <property type="evidence" value="ECO:0007669"/>
    <property type="project" value="UniProtKB-KW"/>
</dbReference>
<dbReference type="GO" id="GO:0008878">
    <property type="term" value="F:glucose-1-phosphate adenylyltransferase activity"/>
    <property type="evidence" value="ECO:0007669"/>
    <property type="project" value="UniProtKB-UniRule"/>
</dbReference>
<dbReference type="GO" id="GO:0005978">
    <property type="term" value="P:glycogen biosynthetic process"/>
    <property type="evidence" value="ECO:0007669"/>
    <property type="project" value="UniProtKB-UniRule"/>
</dbReference>
<dbReference type="CDD" id="cd02508">
    <property type="entry name" value="ADP_Glucose_PP"/>
    <property type="match status" value="1"/>
</dbReference>
<dbReference type="CDD" id="cd04651">
    <property type="entry name" value="LbH_G1P_AT_C"/>
    <property type="match status" value="1"/>
</dbReference>
<dbReference type="FunFam" id="2.160.10.10:FF:000022">
    <property type="entry name" value="Glucose-1-phosphate adenylyltransferase"/>
    <property type="match status" value="1"/>
</dbReference>
<dbReference type="FunFam" id="3.90.550.10:FF:000083">
    <property type="entry name" value="Glucose-1-phosphate adenylyltransferase"/>
    <property type="match status" value="1"/>
</dbReference>
<dbReference type="Gene3D" id="2.160.10.10">
    <property type="entry name" value="Hexapeptide repeat proteins"/>
    <property type="match status" value="1"/>
</dbReference>
<dbReference type="Gene3D" id="3.90.550.10">
    <property type="entry name" value="Spore Coat Polysaccharide Biosynthesis Protein SpsA, Chain A"/>
    <property type="match status" value="1"/>
</dbReference>
<dbReference type="HAMAP" id="MF_00624">
    <property type="entry name" value="GlgC"/>
    <property type="match status" value="1"/>
</dbReference>
<dbReference type="InterPro" id="IPR011831">
    <property type="entry name" value="ADP-Glc_PPase"/>
</dbReference>
<dbReference type="InterPro" id="IPR005836">
    <property type="entry name" value="ADP_Glu_pyroP_CS"/>
</dbReference>
<dbReference type="InterPro" id="IPR023049">
    <property type="entry name" value="GlgC_bac"/>
</dbReference>
<dbReference type="InterPro" id="IPR056818">
    <property type="entry name" value="GlmU/GlgC-like_hexapep"/>
</dbReference>
<dbReference type="InterPro" id="IPR005835">
    <property type="entry name" value="NTP_transferase_dom"/>
</dbReference>
<dbReference type="InterPro" id="IPR029044">
    <property type="entry name" value="Nucleotide-diphossugar_trans"/>
</dbReference>
<dbReference type="InterPro" id="IPR011004">
    <property type="entry name" value="Trimer_LpxA-like_sf"/>
</dbReference>
<dbReference type="NCBIfam" id="TIGR02091">
    <property type="entry name" value="glgC"/>
    <property type="match status" value="1"/>
</dbReference>
<dbReference type="NCBIfam" id="NF003670">
    <property type="entry name" value="PRK05293.1"/>
    <property type="match status" value="1"/>
</dbReference>
<dbReference type="PANTHER" id="PTHR43523:SF2">
    <property type="entry name" value="GLUCOSE-1-PHOSPHATE ADENYLYLTRANSFERASE"/>
    <property type="match status" value="1"/>
</dbReference>
<dbReference type="PANTHER" id="PTHR43523">
    <property type="entry name" value="GLUCOSE-1-PHOSPHATE ADENYLYLTRANSFERASE-RELATED"/>
    <property type="match status" value="1"/>
</dbReference>
<dbReference type="Pfam" id="PF24894">
    <property type="entry name" value="Hexapep_GlmU"/>
    <property type="match status" value="1"/>
</dbReference>
<dbReference type="Pfam" id="PF00483">
    <property type="entry name" value="NTP_transferase"/>
    <property type="match status" value="1"/>
</dbReference>
<dbReference type="SUPFAM" id="SSF53448">
    <property type="entry name" value="Nucleotide-diphospho-sugar transferases"/>
    <property type="match status" value="1"/>
</dbReference>
<dbReference type="SUPFAM" id="SSF51161">
    <property type="entry name" value="Trimeric LpxA-like enzymes"/>
    <property type="match status" value="1"/>
</dbReference>
<dbReference type="PROSITE" id="PS00808">
    <property type="entry name" value="ADP_GLC_PYROPHOSPH_1"/>
    <property type="match status" value="1"/>
</dbReference>
<dbReference type="PROSITE" id="PS00809">
    <property type="entry name" value="ADP_GLC_PYROPHOSPH_2"/>
    <property type="match status" value="1"/>
</dbReference>
<comment type="function">
    <text evidence="1">Involved in the biosynthesis of ADP-glucose, a building block required for the elongation reactions to produce glycogen. Catalyzes the reaction between ATP and alpha-D-glucose 1-phosphate (G1P) to produce pyrophosphate and ADP-Glc.</text>
</comment>
<comment type="catalytic activity">
    <reaction evidence="1">
        <text>alpha-D-glucose 1-phosphate + ATP + H(+) = ADP-alpha-D-glucose + diphosphate</text>
        <dbReference type="Rhea" id="RHEA:12120"/>
        <dbReference type="ChEBI" id="CHEBI:15378"/>
        <dbReference type="ChEBI" id="CHEBI:30616"/>
        <dbReference type="ChEBI" id="CHEBI:33019"/>
        <dbReference type="ChEBI" id="CHEBI:57498"/>
        <dbReference type="ChEBI" id="CHEBI:58601"/>
        <dbReference type="EC" id="2.7.7.27"/>
    </reaction>
</comment>
<comment type="pathway">
    <text evidence="1">Glycan biosynthesis; glycogen biosynthesis.</text>
</comment>
<comment type="subunit">
    <text evidence="1">Homotetramer.</text>
</comment>
<comment type="similarity">
    <text evidence="1">Belongs to the bacterial/plant glucose-1-phosphate adenylyltransferase family.</text>
</comment>
<gene>
    <name evidence="1" type="primary">glgC</name>
    <name type="ordered locus">BCE33L4620</name>
</gene>
<evidence type="ECO:0000255" key="1">
    <source>
        <dbReference type="HAMAP-Rule" id="MF_00624"/>
    </source>
</evidence>
<organism>
    <name type="scientific">Bacillus cereus (strain ZK / E33L)</name>
    <dbReference type="NCBI Taxonomy" id="288681"/>
    <lineage>
        <taxon>Bacteria</taxon>
        <taxon>Bacillati</taxon>
        <taxon>Bacillota</taxon>
        <taxon>Bacilli</taxon>
        <taxon>Bacillales</taxon>
        <taxon>Bacillaceae</taxon>
        <taxon>Bacillus</taxon>
        <taxon>Bacillus cereus group</taxon>
    </lineage>
</organism>